<proteinExistence type="inferred from homology"/>
<comment type="function">
    <text evidence="1">This is one of the proteins that bind and probably mediate the attachment of the 5S RNA into the large ribosomal subunit, where it forms part of the central protuberance. In the 70S ribosome it contacts protein S13 of the 30S subunit (bridge B1b), connecting the 2 subunits; this bridge is implicated in subunit movement. Contacts the P site tRNA; the 5S rRNA and some of its associated proteins might help stabilize positioning of ribosome-bound tRNAs.</text>
</comment>
<comment type="subunit">
    <text evidence="1">Part of the 50S ribosomal subunit; part of the 5S rRNA/L5/L18/L25 subcomplex. Contacts the 5S rRNA and the P site tRNA. Forms a bridge to the 30S subunit in the 70S ribosome.</text>
</comment>
<comment type="similarity">
    <text evidence="1">Belongs to the universal ribosomal protein uL5 family.</text>
</comment>
<comment type="sequence caution" evidence="2">
    <conflict type="erroneous initiation">
        <sequence resource="EMBL-CDS" id="ABD80233"/>
    </conflict>
</comment>
<evidence type="ECO:0000255" key="1">
    <source>
        <dbReference type="HAMAP-Rule" id="MF_01333"/>
    </source>
</evidence>
<evidence type="ECO:0000305" key="2"/>
<protein>
    <recommendedName>
        <fullName evidence="1">Large ribosomal subunit protein uL5</fullName>
    </recommendedName>
    <alternativeName>
        <fullName evidence="2">50S ribosomal protein L5</fullName>
    </alternativeName>
</protein>
<name>RL5_SACD2</name>
<sequence length="179" mass="20288">MARLKEIYKKEIAPKLLKDLELKNPMEIPRITKITLNMGVGEALADKKVLENAVSDLEKIAGQKAVVTRARKSIAGFKVREGWPIGCKVTLRSDRMYEFLDRLISISIPRIRDFRGISPKQFDGRGNFSMGVSEQIIFPEIDYDKIDKLRGLDICISTTARNNDEGRALLKAFNFPFKG</sequence>
<dbReference type="EMBL" id="CP000282">
    <property type="protein sequence ID" value="ABD80233.1"/>
    <property type="status" value="ALT_INIT"/>
    <property type="molecule type" value="Genomic_DNA"/>
</dbReference>
<dbReference type="RefSeq" id="WP_041324270.1">
    <property type="nucleotide sequence ID" value="NC_007912.1"/>
</dbReference>
<dbReference type="SMR" id="Q21M46"/>
<dbReference type="STRING" id="203122.Sde_0971"/>
<dbReference type="GeneID" id="98612657"/>
<dbReference type="KEGG" id="sde:Sde_0971"/>
<dbReference type="eggNOG" id="COG0094">
    <property type="taxonomic scope" value="Bacteria"/>
</dbReference>
<dbReference type="HOGENOM" id="CLU_061015_2_1_6"/>
<dbReference type="OrthoDB" id="9806626at2"/>
<dbReference type="Proteomes" id="UP000001947">
    <property type="component" value="Chromosome"/>
</dbReference>
<dbReference type="GO" id="GO:1990904">
    <property type="term" value="C:ribonucleoprotein complex"/>
    <property type="evidence" value="ECO:0007669"/>
    <property type="project" value="UniProtKB-KW"/>
</dbReference>
<dbReference type="GO" id="GO:0005840">
    <property type="term" value="C:ribosome"/>
    <property type="evidence" value="ECO:0007669"/>
    <property type="project" value="UniProtKB-KW"/>
</dbReference>
<dbReference type="GO" id="GO:0019843">
    <property type="term" value="F:rRNA binding"/>
    <property type="evidence" value="ECO:0007669"/>
    <property type="project" value="UniProtKB-UniRule"/>
</dbReference>
<dbReference type="GO" id="GO:0003735">
    <property type="term" value="F:structural constituent of ribosome"/>
    <property type="evidence" value="ECO:0007669"/>
    <property type="project" value="InterPro"/>
</dbReference>
<dbReference type="GO" id="GO:0000049">
    <property type="term" value="F:tRNA binding"/>
    <property type="evidence" value="ECO:0007669"/>
    <property type="project" value="UniProtKB-UniRule"/>
</dbReference>
<dbReference type="GO" id="GO:0006412">
    <property type="term" value="P:translation"/>
    <property type="evidence" value="ECO:0007669"/>
    <property type="project" value="UniProtKB-UniRule"/>
</dbReference>
<dbReference type="FunFam" id="3.30.1440.10:FF:000001">
    <property type="entry name" value="50S ribosomal protein L5"/>
    <property type="match status" value="1"/>
</dbReference>
<dbReference type="Gene3D" id="3.30.1440.10">
    <property type="match status" value="1"/>
</dbReference>
<dbReference type="HAMAP" id="MF_01333_B">
    <property type="entry name" value="Ribosomal_uL5_B"/>
    <property type="match status" value="1"/>
</dbReference>
<dbReference type="InterPro" id="IPR002132">
    <property type="entry name" value="Ribosomal_uL5"/>
</dbReference>
<dbReference type="InterPro" id="IPR020930">
    <property type="entry name" value="Ribosomal_uL5_bac-type"/>
</dbReference>
<dbReference type="InterPro" id="IPR031309">
    <property type="entry name" value="Ribosomal_uL5_C"/>
</dbReference>
<dbReference type="InterPro" id="IPR020929">
    <property type="entry name" value="Ribosomal_uL5_CS"/>
</dbReference>
<dbReference type="InterPro" id="IPR022803">
    <property type="entry name" value="Ribosomal_uL5_dom_sf"/>
</dbReference>
<dbReference type="InterPro" id="IPR031310">
    <property type="entry name" value="Ribosomal_uL5_N"/>
</dbReference>
<dbReference type="NCBIfam" id="NF000585">
    <property type="entry name" value="PRK00010.1"/>
    <property type="match status" value="1"/>
</dbReference>
<dbReference type="PANTHER" id="PTHR11994">
    <property type="entry name" value="60S RIBOSOMAL PROTEIN L11-RELATED"/>
    <property type="match status" value="1"/>
</dbReference>
<dbReference type="Pfam" id="PF00281">
    <property type="entry name" value="Ribosomal_L5"/>
    <property type="match status" value="1"/>
</dbReference>
<dbReference type="Pfam" id="PF00673">
    <property type="entry name" value="Ribosomal_L5_C"/>
    <property type="match status" value="1"/>
</dbReference>
<dbReference type="PIRSF" id="PIRSF002161">
    <property type="entry name" value="Ribosomal_L5"/>
    <property type="match status" value="1"/>
</dbReference>
<dbReference type="SUPFAM" id="SSF55282">
    <property type="entry name" value="RL5-like"/>
    <property type="match status" value="1"/>
</dbReference>
<dbReference type="PROSITE" id="PS00358">
    <property type="entry name" value="RIBOSOMAL_L5"/>
    <property type="match status" value="1"/>
</dbReference>
<feature type="chain" id="PRO_0000243058" description="Large ribosomal subunit protein uL5">
    <location>
        <begin position="1"/>
        <end position="179"/>
    </location>
</feature>
<accession>Q21M46</accession>
<organism>
    <name type="scientific">Saccharophagus degradans (strain 2-40 / ATCC 43961 / DSM 17024)</name>
    <dbReference type="NCBI Taxonomy" id="203122"/>
    <lineage>
        <taxon>Bacteria</taxon>
        <taxon>Pseudomonadati</taxon>
        <taxon>Pseudomonadota</taxon>
        <taxon>Gammaproteobacteria</taxon>
        <taxon>Cellvibrionales</taxon>
        <taxon>Cellvibrionaceae</taxon>
        <taxon>Saccharophagus</taxon>
    </lineage>
</organism>
<reference key="1">
    <citation type="journal article" date="2008" name="PLoS Genet.">
        <title>Complete genome sequence of the complex carbohydrate-degrading marine bacterium, Saccharophagus degradans strain 2-40 T.</title>
        <authorList>
            <person name="Weiner R.M."/>
            <person name="Taylor L.E. II"/>
            <person name="Henrissat B."/>
            <person name="Hauser L."/>
            <person name="Land M."/>
            <person name="Coutinho P.M."/>
            <person name="Rancurel C."/>
            <person name="Saunders E.H."/>
            <person name="Longmire A.G."/>
            <person name="Zhang H."/>
            <person name="Bayer E.A."/>
            <person name="Gilbert H.J."/>
            <person name="Larimer F."/>
            <person name="Zhulin I.B."/>
            <person name="Ekborg N.A."/>
            <person name="Lamed R."/>
            <person name="Richardson P.M."/>
            <person name="Borovok I."/>
            <person name="Hutcheson S."/>
        </authorList>
    </citation>
    <scope>NUCLEOTIDE SEQUENCE [LARGE SCALE GENOMIC DNA]</scope>
    <source>
        <strain>2-40 / ATCC 43961 / DSM 17024</strain>
    </source>
</reference>
<gene>
    <name evidence="1" type="primary">rplE</name>
    <name type="ordered locus">Sde_0971</name>
</gene>
<keyword id="KW-1185">Reference proteome</keyword>
<keyword id="KW-0687">Ribonucleoprotein</keyword>
<keyword id="KW-0689">Ribosomal protein</keyword>
<keyword id="KW-0694">RNA-binding</keyword>
<keyword id="KW-0699">rRNA-binding</keyword>
<keyword id="KW-0820">tRNA-binding</keyword>